<reference key="1">
    <citation type="journal article" date="1998" name="DNA Res.">
        <title>Structural analysis of Arabidopsis thaliana chromosome 5. V. Sequence features of the regions of 1,381,565 bp covered by twenty one physically assigned P1 and TAC clones.</title>
        <authorList>
            <person name="Kaneko T."/>
            <person name="Kotani H."/>
            <person name="Nakamura Y."/>
            <person name="Sato S."/>
            <person name="Asamizu E."/>
            <person name="Miyajima N."/>
            <person name="Tabata S."/>
        </authorList>
    </citation>
    <scope>NUCLEOTIDE SEQUENCE [LARGE SCALE GENOMIC DNA]</scope>
    <source>
        <strain>cv. Columbia</strain>
    </source>
</reference>
<reference key="2">
    <citation type="journal article" date="2017" name="Plant J.">
        <title>Araport11: a complete reannotation of the Arabidopsis thaliana reference genome.</title>
        <authorList>
            <person name="Cheng C.Y."/>
            <person name="Krishnakumar V."/>
            <person name="Chan A.P."/>
            <person name="Thibaud-Nissen F."/>
            <person name="Schobel S."/>
            <person name="Town C.D."/>
        </authorList>
    </citation>
    <scope>GENOME REANNOTATION</scope>
    <source>
        <strain>cv. Columbia</strain>
    </source>
</reference>
<reference key="3">
    <citation type="journal article" date="2003" name="Science">
        <title>Empirical analysis of transcriptional activity in the Arabidopsis genome.</title>
        <authorList>
            <person name="Yamada K."/>
            <person name="Lim J."/>
            <person name="Dale J.M."/>
            <person name="Chen H."/>
            <person name="Shinn P."/>
            <person name="Palm C.J."/>
            <person name="Southwick A.M."/>
            <person name="Wu H.C."/>
            <person name="Kim C.J."/>
            <person name="Nguyen M."/>
            <person name="Pham P.K."/>
            <person name="Cheuk R.F."/>
            <person name="Karlin-Newmann G."/>
            <person name="Liu S.X."/>
            <person name="Lam B."/>
            <person name="Sakano H."/>
            <person name="Wu T."/>
            <person name="Yu G."/>
            <person name="Miranda M."/>
            <person name="Quach H.L."/>
            <person name="Tripp M."/>
            <person name="Chang C.H."/>
            <person name="Lee J.M."/>
            <person name="Toriumi M.J."/>
            <person name="Chan M.M."/>
            <person name="Tang C.C."/>
            <person name="Onodera C.S."/>
            <person name="Deng J.M."/>
            <person name="Akiyama K."/>
            <person name="Ansari Y."/>
            <person name="Arakawa T."/>
            <person name="Banh J."/>
            <person name="Banno F."/>
            <person name="Bowser L."/>
            <person name="Brooks S.Y."/>
            <person name="Carninci P."/>
            <person name="Chao Q."/>
            <person name="Choy N."/>
            <person name="Enju A."/>
            <person name="Goldsmith A.D."/>
            <person name="Gurjal M."/>
            <person name="Hansen N.F."/>
            <person name="Hayashizaki Y."/>
            <person name="Johnson-Hopson C."/>
            <person name="Hsuan V.W."/>
            <person name="Iida K."/>
            <person name="Karnes M."/>
            <person name="Khan S."/>
            <person name="Koesema E."/>
            <person name="Ishida J."/>
            <person name="Jiang P.X."/>
            <person name="Jones T."/>
            <person name="Kawai J."/>
            <person name="Kamiya A."/>
            <person name="Meyers C."/>
            <person name="Nakajima M."/>
            <person name="Narusaka M."/>
            <person name="Seki M."/>
            <person name="Sakurai T."/>
            <person name="Satou M."/>
            <person name="Tamse R."/>
            <person name="Vaysberg M."/>
            <person name="Wallender E.K."/>
            <person name="Wong C."/>
            <person name="Yamamura Y."/>
            <person name="Yuan S."/>
            <person name="Shinozaki K."/>
            <person name="Davis R.W."/>
            <person name="Theologis A."/>
            <person name="Ecker J.R."/>
        </authorList>
    </citation>
    <scope>NUCLEOTIDE SEQUENCE [LARGE SCALE MRNA]</scope>
    <source>
        <strain>cv. Columbia</strain>
    </source>
</reference>
<reference key="4">
    <citation type="journal article" date="1993" name="Plant J.">
        <title>Isolation and characterization of two related Arabidopsis ocs-element bZIP binding proteins.</title>
        <authorList>
            <person name="Zhang B."/>
            <person name="Foley R.C."/>
            <person name="Singh K.B."/>
        </authorList>
    </citation>
    <scope>NUCLEOTIDE SEQUENCE [MRNA] OF 7-330</scope>
    <source>
        <strain>cv. Columbia</strain>
        <tissue>Root</tissue>
    </source>
</reference>
<reference key="5">
    <citation type="journal article" date="1995" name="Nucleic Acids Res.">
        <title>Binding site requirements and differential representation of TGF factors in nuclear ASF-1 activity.</title>
        <authorList>
            <person name="Lam E."/>
            <person name="Lam Y.K."/>
        </authorList>
    </citation>
    <scope>DNA-BINDING</scope>
</reference>
<reference key="6">
    <citation type="journal article" date="1995" name="Plant Cell">
        <title>Interactions between distinct types of DNA binding proteins enhance binding to ocs element promoter sequences.</title>
        <authorList>
            <person name="Zhang B."/>
            <person name="Chen W."/>
            <person name="Foley R.C."/>
            <person name="Buettner M."/>
            <person name="Singh K.B."/>
        </authorList>
    </citation>
    <scope>INTERACTION WITH OBP1</scope>
</reference>
<reference key="7">
    <citation type="journal article" date="2000" name="Mol. Plant Microbe Interact.">
        <title>NPR1 differentially interacts with members of the TGA/OBF family of transcription factors that bind an element of the PR-1 gene required for induction by salicylic acid.</title>
        <authorList>
            <person name="Zhou J.-M."/>
            <person name="Trifa Y."/>
            <person name="Silva H."/>
            <person name="Pontier D."/>
            <person name="Lam E."/>
            <person name="Shah J."/>
            <person name="Klessig D.F."/>
        </authorList>
    </citation>
    <scope>INTERACTION WITH NPR1</scope>
</reference>
<reference key="8">
    <citation type="journal article" date="2002" name="Trends Plant Sci.">
        <title>bZIP transcription factors in Arabidopsis.</title>
        <authorList>
            <person name="Jakoby M."/>
            <person name="Weisshaar B."/>
            <person name="Droege-Laser W."/>
            <person name="Vicente-Carbajosa J."/>
            <person name="Tiedemann J."/>
            <person name="Kroj T."/>
            <person name="Parcy F."/>
        </authorList>
    </citation>
    <scope>GENE FAMILY</scope>
    <scope>NOMENCLATURE</scope>
</reference>
<reference key="9">
    <citation type="journal article" date="2005" name="Plant J.">
        <title>An Arabidopsis NPR1-like gene, NPR4, is required for disease resistance.</title>
        <authorList>
            <person name="Liu G."/>
            <person name="Holub E.B."/>
            <person name="Alonso J.M."/>
            <person name="Ecker J.R."/>
            <person name="Fobert P.R."/>
        </authorList>
    </citation>
    <scope>INTERACTION WITH NPR1 AND NPR4</scope>
</reference>
<reference key="10">
    <citation type="journal article" date="2006" name="Plant J.">
        <title>Negative regulation of defense responses in Arabidopsis by two NPR1 paralogs.</title>
        <authorList>
            <person name="Zhang Y."/>
            <person name="Cheng Y.T."/>
            <person name="Qu N."/>
            <person name="Zhao Q."/>
            <person name="Bi D."/>
            <person name="Li X."/>
        </authorList>
    </citation>
    <scope>INTERACTION WITH NPR3 AND NPR4</scope>
</reference>
<sequence length="330" mass="36890">MGDTSPRTSVSTDGDTDHNNLMFDEGHLGIGASDSSDRSKSKMDQKTLRRLAQNREAARKSRLRKKAYVQQLENSRLKLTQLEQELQRARQQGVFISSSGDQAHSTAGDGAMAFDVEYRRWQEDKNRQMKELSSAIDSHATDSELRIIVDGVIAHYEELYRIKGNAAKSDVFHLLSGMWKTPAERCFLWLGGFRSSELLKLIASQLEPLTEQQSLDINNLQQSSQQAEDALSQGMDNLQQSLADTLSSGTLGSSSSGNVASYMGQMAMAMGKLGTLEGFIRQADNLRLQTYQQMVRLLTTRQSARALLAVHNYTLRLRALSSLWLARPRE</sequence>
<accession>Q39163</accession>
<accession>Q9FL50</accession>
<dbReference type="EMBL" id="AB010697">
    <property type="protein sequence ID" value="BAB11154.1"/>
    <property type="molecule type" value="Genomic_DNA"/>
</dbReference>
<dbReference type="EMBL" id="CP002688">
    <property type="protein sequence ID" value="AED91089.1"/>
    <property type="molecule type" value="Genomic_DNA"/>
</dbReference>
<dbReference type="EMBL" id="CP002688">
    <property type="protein sequence ID" value="AED91090.1"/>
    <property type="molecule type" value="Genomic_DNA"/>
</dbReference>
<dbReference type="EMBL" id="AY058830">
    <property type="protein sequence ID" value="AAL24218.1"/>
    <property type="molecule type" value="mRNA"/>
</dbReference>
<dbReference type="EMBL" id="AY143864">
    <property type="protein sequence ID" value="AAN28803.1"/>
    <property type="molecule type" value="mRNA"/>
</dbReference>
<dbReference type="EMBL" id="X69900">
    <property type="protein sequence ID" value="CAA49525.1"/>
    <property type="molecule type" value="mRNA"/>
</dbReference>
<dbReference type="PIR" id="S48122">
    <property type="entry name" value="S48122"/>
</dbReference>
<dbReference type="RefSeq" id="NP_196313.1">
    <property type="nucleotide sequence ID" value="NM_120778.4"/>
</dbReference>
<dbReference type="RefSeq" id="NP_974745.1">
    <property type="nucleotide sequence ID" value="NM_203016.2"/>
</dbReference>
<dbReference type="SMR" id="Q39163"/>
<dbReference type="BioGRID" id="15866">
    <property type="interactions" value="20"/>
</dbReference>
<dbReference type="FunCoup" id="Q39163">
    <property type="interactions" value="679"/>
</dbReference>
<dbReference type="IntAct" id="Q39163">
    <property type="interactions" value="17"/>
</dbReference>
<dbReference type="STRING" id="3702.Q39163"/>
<dbReference type="PaxDb" id="3702-AT5G06960.1"/>
<dbReference type="ProteomicsDB" id="234410"/>
<dbReference type="EnsemblPlants" id="AT5G06960.1">
    <property type="protein sequence ID" value="AT5G06960.1"/>
    <property type="gene ID" value="AT5G06960"/>
</dbReference>
<dbReference type="EnsemblPlants" id="AT5G06960.2">
    <property type="protein sequence ID" value="AT5G06960.2"/>
    <property type="gene ID" value="AT5G06960"/>
</dbReference>
<dbReference type="GeneID" id="830587"/>
<dbReference type="Gramene" id="AT5G06960.1">
    <property type="protein sequence ID" value="AT5G06960.1"/>
    <property type="gene ID" value="AT5G06960"/>
</dbReference>
<dbReference type="Gramene" id="AT5G06960.2">
    <property type="protein sequence ID" value="AT5G06960.2"/>
    <property type="gene ID" value="AT5G06960"/>
</dbReference>
<dbReference type="KEGG" id="ath:AT5G06960"/>
<dbReference type="Araport" id="AT5G06960"/>
<dbReference type="TAIR" id="AT5G06960">
    <property type="gene designation" value="OBF5"/>
</dbReference>
<dbReference type="eggNOG" id="ENOG502QU32">
    <property type="taxonomic scope" value="Eukaryota"/>
</dbReference>
<dbReference type="HOGENOM" id="CLU_024782_1_1_1"/>
<dbReference type="InParanoid" id="Q39163"/>
<dbReference type="OrthoDB" id="2015618at2759"/>
<dbReference type="PhylomeDB" id="Q39163"/>
<dbReference type="PRO" id="PR:Q39163"/>
<dbReference type="Proteomes" id="UP000006548">
    <property type="component" value="Chromosome 5"/>
</dbReference>
<dbReference type="ExpressionAtlas" id="Q39163">
    <property type="expression patterns" value="baseline and differential"/>
</dbReference>
<dbReference type="GO" id="GO:0005634">
    <property type="term" value="C:nucleus"/>
    <property type="evidence" value="ECO:0007669"/>
    <property type="project" value="UniProtKB-SubCell"/>
</dbReference>
<dbReference type="GO" id="GO:0003677">
    <property type="term" value="F:DNA binding"/>
    <property type="evidence" value="ECO:0000314"/>
    <property type="project" value="TAIR"/>
</dbReference>
<dbReference type="GO" id="GO:0003700">
    <property type="term" value="F:DNA-binding transcription factor activity"/>
    <property type="evidence" value="ECO:0000250"/>
    <property type="project" value="TAIR"/>
</dbReference>
<dbReference type="GO" id="GO:0042802">
    <property type="term" value="F:identical protein binding"/>
    <property type="evidence" value="ECO:0000353"/>
    <property type="project" value="IntAct"/>
</dbReference>
<dbReference type="GO" id="GO:0000976">
    <property type="term" value="F:transcription cis-regulatory region binding"/>
    <property type="evidence" value="ECO:0000353"/>
    <property type="project" value="TAIR"/>
</dbReference>
<dbReference type="GO" id="GO:0098542">
    <property type="term" value="P:defense response to other organism"/>
    <property type="evidence" value="ECO:0000304"/>
    <property type="project" value="TAIR"/>
</dbReference>
<dbReference type="GO" id="GO:0006351">
    <property type="term" value="P:DNA-templated transcription"/>
    <property type="evidence" value="ECO:0007669"/>
    <property type="project" value="InterPro"/>
</dbReference>
<dbReference type="GO" id="GO:0009410">
    <property type="term" value="P:response to xenobiotic stimulus"/>
    <property type="evidence" value="ECO:0000316"/>
    <property type="project" value="TAIR"/>
</dbReference>
<dbReference type="GO" id="GO:0009863">
    <property type="term" value="P:salicylic acid mediated signaling pathway"/>
    <property type="evidence" value="ECO:0000353"/>
    <property type="project" value="TAIR"/>
</dbReference>
<dbReference type="FunFam" id="1.20.5.170:FF:000019">
    <property type="entry name" value="BZIP family transcription factor"/>
    <property type="match status" value="1"/>
</dbReference>
<dbReference type="Gene3D" id="1.20.5.170">
    <property type="match status" value="1"/>
</dbReference>
<dbReference type="InterPro" id="IPR004827">
    <property type="entry name" value="bZIP"/>
</dbReference>
<dbReference type="InterPro" id="IPR046347">
    <property type="entry name" value="bZIP_sf"/>
</dbReference>
<dbReference type="InterPro" id="IPR025422">
    <property type="entry name" value="TGA_domain"/>
</dbReference>
<dbReference type="PANTHER" id="PTHR45693:SF39">
    <property type="entry name" value="TRANSCRIPTION FACTOR TGA5"/>
    <property type="match status" value="1"/>
</dbReference>
<dbReference type="PANTHER" id="PTHR45693">
    <property type="entry name" value="TRANSCRIPTION FACTOR TGA9"/>
    <property type="match status" value="1"/>
</dbReference>
<dbReference type="Pfam" id="PF00170">
    <property type="entry name" value="bZIP_1"/>
    <property type="match status" value="1"/>
</dbReference>
<dbReference type="Pfam" id="PF14144">
    <property type="entry name" value="DOG1"/>
    <property type="match status" value="1"/>
</dbReference>
<dbReference type="SMART" id="SM00338">
    <property type="entry name" value="BRLZ"/>
    <property type="match status" value="1"/>
</dbReference>
<dbReference type="SUPFAM" id="SSF57959">
    <property type="entry name" value="Leucine zipper domain"/>
    <property type="match status" value="1"/>
</dbReference>
<dbReference type="PROSITE" id="PS50217">
    <property type="entry name" value="BZIP"/>
    <property type="match status" value="1"/>
</dbReference>
<dbReference type="PROSITE" id="PS00036">
    <property type="entry name" value="BZIP_BASIC"/>
    <property type="match status" value="1"/>
</dbReference>
<dbReference type="PROSITE" id="PS51806">
    <property type="entry name" value="DOG1"/>
    <property type="match status" value="1"/>
</dbReference>
<keyword id="KW-0010">Activator</keyword>
<keyword id="KW-0175">Coiled coil</keyword>
<keyword id="KW-0238">DNA-binding</keyword>
<keyword id="KW-0539">Nucleus</keyword>
<keyword id="KW-1185">Reference proteome</keyword>
<keyword id="KW-0804">Transcription</keyword>
<keyword id="KW-0805">Transcription regulation</keyword>
<gene>
    <name type="primary">TGA5</name>
    <name type="synonym">BZIP26</name>
    <name type="synonym">OBF5</name>
    <name type="ordered locus">At5g06960</name>
    <name type="ORF">MOJ9.13</name>
</gene>
<comment type="function">
    <text>Transcriptional activator that binds specifically to the DNA sequence 5'-TGACG-3'. Recognizes ocs elements like the as-1 motif of the cauliflower mosaic virus 35S promoter. Binding to the as-1-like cis elements mediate auxin- and salicylic acid-inducible transcription. May be involved in the induction of the systemic acquired resistance (SAR) via its interaction with NPR1. Could also bind to the Hex-motif (5'-TGACGTGG-3') another cis-acting element found in plant histone promoters.</text>
</comment>
<comment type="subunit">
    <text evidence="5 6 7 8">Binds DNA as a dimer. Interaction with the Dof domain protein OBP1 enhances the binding to the ocs element. Interacts with NPR1, NPR3 and NPR4.</text>
</comment>
<comment type="interaction">
    <interactant intactId="EBI-541381">
        <id>Q39163</id>
    </interactant>
    <interactant intactId="EBI-1392127">
        <id>P93002</id>
        <label>NPR1</label>
    </interactant>
    <organismsDiffer>false</organismsDiffer>
    <experiments>8</experiments>
</comment>
<comment type="interaction">
    <interactant intactId="EBI-541381">
        <id>Q39163</id>
    </interactant>
    <interactant intactId="EBI-541093">
        <id>Q8L9W4</id>
        <label>NPR1</label>
    </interactant>
    <organismsDiffer>false</organismsDiffer>
    <experiments>4</experiments>
</comment>
<comment type="interaction">
    <interactant intactId="EBI-541381">
        <id>Q39163</id>
    </interactant>
    <interactant intactId="EBI-4441365">
        <id>Q8L746</id>
        <label>NPR3</label>
    </interactant>
    <organismsDiffer>false</organismsDiffer>
    <experiments>4</experiments>
</comment>
<comment type="interaction">
    <interactant intactId="EBI-541381">
        <id>Q39163</id>
    </interactant>
    <interactant intactId="EBI-541307">
        <id>P43273</id>
        <label>TGA2</label>
    </interactant>
    <organismsDiffer>false</organismsDiffer>
    <experiments>8</experiments>
</comment>
<comment type="interaction">
    <interactant intactId="EBI-541381">
        <id>Q39163</id>
    </interactant>
    <interactant intactId="EBI-541366">
        <id>Q39234</id>
        <label>TGA3</label>
    </interactant>
    <organismsDiffer>false</organismsDiffer>
    <experiments>7</experiments>
</comment>
<comment type="interaction">
    <interactant intactId="EBI-541381">
        <id>Q39163</id>
    </interactant>
    <interactant intactId="EBI-541381">
        <id>Q39163</id>
        <label>TGA5</label>
    </interactant>
    <organismsDiffer>false</organismsDiffer>
    <experiments>2</experiments>
</comment>
<comment type="interaction">
    <interactant intactId="EBI-541381">
        <id>Q39163</id>
    </interactant>
    <interactant intactId="EBI-541321">
        <id>Q39140</id>
        <label>TGA6</label>
    </interactant>
    <organismsDiffer>false</organismsDiffer>
    <experiments>3</experiments>
</comment>
<comment type="interaction">
    <interactant intactId="EBI-541381">
        <id>Q39163</id>
    </interactant>
    <interactant intactId="EBI-541400">
        <id>Q93ZE2</id>
        <label>TGA7</label>
    </interactant>
    <organismsDiffer>false</organismsDiffer>
    <experiments>7</experiments>
</comment>
<comment type="subcellular location">
    <subcellularLocation>
        <location>Nucleus</location>
    </subcellularLocation>
</comment>
<comment type="tissue specificity">
    <text>Predominantly expressed in roots.</text>
</comment>
<comment type="similarity">
    <text evidence="9">Belongs to the bZIP family.</text>
</comment>
<evidence type="ECO:0000255" key="1"/>
<evidence type="ECO:0000255" key="2">
    <source>
        <dbReference type="PROSITE-ProRule" id="PRU00978"/>
    </source>
</evidence>
<evidence type="ECO:0000255" key="3">
    <source>
        <dbReference type="PROSITE-ProRule" id="PRU01147"/>
    </source>
</evidence>
<evidence type="ECO:0000256" key="4">
    <source>
        <dbReference type="SAM" id="MobiDB-lite"/>
    </source>
</evidence>
<evidence type="ECO:0000269" key="5">
    <source>
    </source>
</evidence>
<evidence type="ECO:0000269" key="6">
    <source>
    </source>
</evidence>
<evidence type="ECO:0000269" key="7">
    <source>
    </source>
</evidence>
<evidence type="ECO:0000269" key="8">
    <source>
    </source>
</evidence>
<evidence type="ECO:0000305" key="9"/>
<name>TGA5_ARATH</name>
<organism>
    <name type="scientific">Arabidopsis thaliana</name>
    <name type="common">Mouse-ear cress</name>
    <dbReference type="NCBI Taxonomy" id="3702"/>
    <lineage>
        <taxon>Eukaryota</taxon>
        <taxon>Viridiplantae</taxon>
        <taxon>Streptophyta</taxon>
        <taxon>Embryophyta</taxon>
        <taxon>Tracheophyta</taxon>
        <taxon>Spermatophyta</taxon>
        <taxon>Magnoliopsida</taxon>
        <taxon>eudicotyledons</taxon>
        <taxon>Gunneridae</taxon>
        <taxon>Pentapetalae</taxon>
        <taxon>rosids</taxon>
        <taxon>malvids</taxon>
        <taxon>Brassicales</taxon>
        <taxon>Brassicaceae</taxon>
        <taxon>Camelineae</taxon>
        <taxon>Arabidopsis</taxon>
    </lineage>
</organism>
<feature type="chain" id="PRO_0000076557" description="Transcription factor TGA5">
    <location>
        <begin position="1"/>
        <end position="330"/>
    </location>
</feature>
<feature type="domain" description="bZIP" evidence="2">
    <location>
        <begin position="44"/>
        <end position="107"/>
    </location>
</feature>
<feature type="domain" description="DOG1" evidence="3">
    <location>
        <begin position="111"/>
        <end position="327"/>
    </location>
</feature>
<feature type="region of interest" description="Disordered" evidence="4">
    <location>
        <begin position="1"/>
        <end position="64"/>
    </location>
</feature>
<feature type="region of interest" description="Basic motif" evidence="2">
    <location>
        <begin position="46"/>
        <end position="66"/>
    </location>
</feature>
<feature type="region of interest" description="Leucine-zipper" evidence="2">
    <location>
        <begin position="72"/>
        <end position="86"/>
    </location>
</feature>
<feature type="coiled-coil region" evidence="1">
    <location>
        <begin position="45"/>
        <end position="98"/>
    </location>
</feature>
<feature type="coiled-coil region" evidence="1">
    <location>
        <begin position="211"/>
        <end position="244"/>
    </location>
</feature>
<feature type="compositionally biased region" description="Polar residues" evidence="4">
    <location>
        <begin position="1"/>
        <end position="13"/>
    </location>
</feature>
<feature type="compositionally biased region" description="Basic and acidic residues" evidence="4">
    <location>
        <begin position="35"/>
        <end position="47"/>
    </location>
</feature>
<feature type="sequence conflict" description="In Ref. 4; CAA49525." evidence="9" ref="4">
    <original>S</original>
    <variation>C</variation>
    <location>
        <position position="204"/>
    </location>
</feature>
<feature type="sequence conflict" description="In Ref. 4; CAA49525." evidence="9" ref="4">
    <original>S</original>
    <variation>T</variation>
    <location>
        <position position="224"/>
    </location>
</feature>
<proteinExistence type="evidence at protein level"/>
<protein>
    <recommendedName>
        <fullName>Transcription factor TGA5</fullName>
    </recommendedName>
    <alternativeName>
        <fullName>Ocs element-binding factor 5</fullName>
        <shortName>OBF5</shortName>
    </alternativeName>
    <alternativeName>
        <fullName>bZIP transcription factor 26</fullName>
        <shortName>AtbZIP26</shortName>
    </alternativeName>
</protein>